<gene>
    <name evidence="2" type="primary">fen</name>
    <name type="ordered locus">Mpal_0057</name>
</gene>
<feature type="chain" id="PRO_1000200237" description="Flap endonuclease 1">
    <location>
        <begin position="1"/>
        <end position="333"/>
    </location>
</feature>
<feature type="region of interest" description="N-domain">
    <location>
        <begin position="1"/>
        <end position="99"/>
    </location>
</feature>
<feature type="region of interest" description="I-domain">
    <location>
        <begin position="117"/>
        <end position="256"/>
    </location>
</feature>
<feature type="region of interest" description="Interaction with PCNA" evidence="2">
    <location>
        <begin position="325"/>
        <end position="333"/>
    </location>
</feature>
<feature type="binding site" evidence="2">
    <location>
        <position position="28"/>
    </location>
    <ligand>
        <name>Mg(2+)</name>
        <dbReference type="ChEBI" id="CHEBI:18420"/>
        <label>1</label>
    </ligand>
</feature>
<feature type="binding site" evidence="2">
    <location>
        <position position="81"/>
    </location>
    <ligand>
        <name>Mg(2+)</name>
        <dbReference type="ChEBI" id="CHEBI:18420"/>
        <label>1</label>
    </ligand>
</feature>
<feature type="binding site" evidence="2">
    <location>
        <position position="153"/>
    </location>
    <ligand>
        <name>Mg(2+)</name>
        <dbReference type="ChEBI" id="CHEBI:18420"/>
        <label>1</label>
    </ligand>
</feature>
<feature type="binding site" evidence="2">
    <location>
        <position position="155"/>
    </location>
    <ligand>
        <name>Mg(2+)</name>
        <dbReference type="ChEBI" id="CHEBI:18420"/>
        <label>1</label>
    </ligand>
</feature>
<feature type="binding site" evidence="2">
    <location>
        <position position="174"/>
    </location>
    <ligand>
        <name>Mg(2+)</name>
        <dbReference type="ChEBI" id="CHEBI:18420"/>
        <label>2</label>
    </ligand>
</feature>
<feature type="binding site" evidence="2">
    <location>
        <position position="176"/>
    </location>
    <ligand>
        <name>Mg(2+)</name>
        <dbReference type="ChEBI" id="CHEBI:18420"/>
        <label>2</label>
    </ligand>
</feature>
<feature type="binding site" evidence="2">
    <location>
        <position position="235"/>
    </location>
    <ligand>
        <name>Mg(2+)</name>
        <dbReference type="ChEBI" id="CHEBI:18420"/>
        <label>2</label>
    </ligand>
</feature>
<reference key="1">
    <citation type="journal article" date="2015" name="Genome Announc.">
        <title>Complete Genome Sequence of Methanosphaerula palustris E1-9CT, a Hydrogenotrophic Methanogen Isolated from a Minerotrophic Fen Peatland.</title>
        <authorList>
            <person name="Cadillo-Quiroz H."/>
            <person name="Browne P."/>
            <person name="Kyrpides N."/>
            <person name="Woyke T."/>
            <person name="Goodwin L."/>
            <person name="Detter C."/>
            <person name="Yavitt J.B."/>
            <person name="Zinder S.H."/>
        </authorList>
    </citation>
    <scope>NUCLEOTIDE SEQUENCE [LARGE SCALE GENOMIC DNA]</scope>
    <source>
        <strain>ATCC BAA-1556 / DSM 19958 / E1-9c</strain>
    </source>
</reference>
<organism>
    <name type="scientific">Methanosphaerula palustris (strain ATCC BAA-1556 / DSM 19958 / E1-9c)</name>
    <dbReference type="NCBI Taxonomy" id="521011"/>
    <lineage>
        <taxon>Archaea</taxon>
        <taxon>Methanobacteriati</taxon>
        <taxon>Methanobacteriota</taxon>
        <taxon>Stenosarchaea group</taxon>
        <taxon>Methanomicrobia</taxon>
        <taxon>Methanomicrobiales</taxon>
        <taxon>Methanoregulaceae</taxon>
        <taxon>Methanosphaerula</taxon>
    </lineage>
</organism>
<proteinExistence type="inferred from homology"/>
<comment type="function">
    <text evidence="1">Structure-specific nuclease with 5'-flap endonuclease and 5'-3' exonuclease activities involved in DNA replication and repair. During DNA replication, cleaves the 5'-overhanging flap structure that is generated by displacement synthesis when DNA polymerase encounters the 5'-end of a downstream Okazaki fragment. Binds the unpaired 3'-DNA end and kinks the DNA to facilitate 5' cleavage specificity. Cleaves one nucleotide into the double-stranded DNA from the junction in flap DNA, leaving a nick for ligation. Also involved in the base excision repair (BER) pathway. Acts as a genome stabilization factor that prevents flaps from equilibrating into structures that lead to duplications and deletions. Also possesses 5'-3' exonuclease activity on nicked or gapped double-stranded DNA (By similarity).</text>
</comment>
<comment type="cofactor">
    <cofactor evidence="2">
        <name>Mg(2+)</name>
        <dbReference type="ChEBI" id="CHEBI:18420"/>
    </cofactor>
    <text evidence="2">Binds 2 magnesium ions per subunit. They probably participate in the reaction catalyzed by the enzyme. May bind an additional third magnesium ion after substrate binding.</text>
</comment>
<comment type="subunit">
    <text evidence="2">Interacts with PCNA. PCNA stimulates the nuclease activity without altering cleavage specificity.</text>
</comment>
<comment type="similarity">
    <text evidence="2">Belongs to the XPG/RAD2 endonuclease family. FEN1 subfamily.</text>
</comment>
<keyword id="KW-0227">DNA damage</keyword>
<keyword id="KW-0234">DNA repair</keyword>
<keyword id="KW-0235">DNA replication</keyword>
<keyword id="KW-0255">Endonuclease</keyword>
<keyword id="KW-0269">Exonuclease</keyword>
<keyword id="KW-0378">Hydrolase</keyword>
<keyword id="KW-0460">Magnesium</keyword>
<keyword id="KW-0479">Metal-binding</keyword>
<keyword id="KW-0540">Nuclease</keyword>
<keyword id="KW-1185">Reference proteome</keyword>
<dbReference type="EC" id="3.1.-.-" evidence="2"/>
<dbReference type="EMBL" id="CP001338">
    <property type="protein sequence ID" value="ACL15451.1"/>
    <property type="molecule type" value="Genomic_DNA"/>
</dbReference>
<dbReference type="RefSeq" id="WP_012616770.1">
    <property type="nucleotide sequence ID" value="NC_011832.1"/>
</dbReference>
<dbReference type="SMR" id="B8GIA0"/>
<dbReference type="STRING" id="521011.Mpal_0057"/>
<dbReference type="GeneID" id="7272226"/>
<dbReference type="KEGG" id="mpl:Mpal_0057"/>
<dbReference type="eggNOG" id="arCOG04050">
    <property type="taxonomic scope" value="Archaea"/>
</dbReference>
<dbReference type="HOGENOM" id="CLU_032444_0_0_2"/>
<dbReference type="OrthoDB" id="9593at2157"/>
<dbReference type="Proteomes" id="UP000002457">
    <property type="component" value="Chromosome"/>
</dbReference>
<dbReference type="GO" id="GO:0008409">
    <property type="term" value="F:5'-3' exonuclease activity"/>
    <property type="evidence" value="ECO:0007669"/>
    <property type="project" value="UniProtKB-UniRule"/>
</dbReference>
<dbReference type="GO" id="GO:0017108">
    <property type="term" value="F:5'-flap endonuclease activity"/>
    <property type="evidence" value="ECO:0007669"/>
    <property type="project" value="UniProtKB-UniRule"/>
</dbReference>
<dbReference type="GO" id="GO:0003677">
    <property type="term" value="F:DNA binding"/>
    <property type="evidence" value="ECO:0007669"/>
    <property type="project" value="UniProtKB-UniRule"/>
</dbReference>
<dbReference type="GO" id="GO:0000287">
    <property type="term" value="F:magnesium ion binding"/>
    <property type="evidence" value="ECO:0007669"/>
    <property type="project" value="UniProtKB-UniRule"/>
</dbReference>
<dbReference type="GO" id="GO:0006281">
    <property type="term" value="P:DNA repair"/>
    <property type="evidence" value="ECO:0007669"/>
    <property type="project" value="UniProtKB-UniRule"/>
</dbReference>
<dbReference type="GO" id="GO:0043137">
    <property type="term" value="P:DNA replication, removal of RNA primer"/>
    <property type="evidence" value="ECO:0007669"/>
    <property type="project" value="UniProtKB-UniRule"/>
</dbReference>
<dbReference type="CDD" id="cd09867">
    <property type="entry name" value="PIN_FEN1"/>
    <property type="match status" value="1"/>
</dbReference>
<dbReference type="FunFam" id="3.40.50.1010:FF:000016">
    <property type="entry name" value="Flap endonuclease 1"/>
    <property type="match status" value="1"/>
</dbReference>
<dbReference type="Gene3D" id="1.10.150.20">
    <property type="entry name" value="5' to 3' exonuclease, C-terminal subdomain"/>
    <property type="match status" value="1"/>
</dbReference>
<dbReference type="Gene3D" id="3.40.50.1010">
    <property type="entry name" value="5'-nuclease"/>
    <property type="match status" value="1"/>
</dbReference>
<dbReference type="HAMAP" id="MF_00614">
    <property type="entry name" value="Fen"/>
    <property type="match status" value="1"/>
</dbReference>
<dbReference type="InterPro" id="IPR036279">
    <property type="entry name" value="5-3_exonuclease_C_sf"/>
</dbReference>
<dbReference type="InterPro" id="IPR023426">
    <property type="entry name" value="Flap_endonuc"/>
</dbReference>
<dbReference type="InterPro" id="IPR019973">
    <property type="entry name" value="Flap_endonuc_arc"/>
</dbReference>
<dbReference type="InterPro" id="IPR008918">
    <property type="entry name" value="HhH2"/>
</dbReference>
<dbReference type="InterPro" id="IPR029060">
    <property type="entry name" value="PIN-like_dom_sf"/>
</dbReference>
<dbReference type="InterPro" id="IPR006086">
    <property type="entry name" value="XPG-I_dom"/>
</dbReference>
<dbReference type="InterPro" id="IPR006084">
    <property type="entry name" value="XPG/Rad2"/>
</dbReference>
<dbReference type="InterPro" id="IPR019974">
    <property type="entry name" value="XPG_CS"/>
</dbReference>
<dbReference type="InterPro" id="IPR006085">
    <property type="entry name" value="XPG_DNA_repair_N"/>
</dbReference>
<dbReference type="NCBIfam" id="TIGR03674">
    <property type="entry name" value="fen_arch"/>
    <property type="match status" value="1"/>
</dbReference>
<dbReference type="PANTHER" id="PTHR11081:SF9">
    <property type="entry name" value="FLAP ENDONUCLEASE 1"/>
    <property type="match status" value="1"/>
</dbReference>
<dbReference type="PANTHER" id="PTHR11081">
    <property type="entry name" value="FLAP ENDONUCLEASE FAMILY MEMBER"/>
    <property type="match status" value="1"/>
</dbReference>
<dbReference type="Pfam" id="PF00867">
    <property type="entry name" value="XPG_I"/>
    <property type="match status" value="1"/>
</dbReference>
<dbReference type="Pfam" id="PF00752">
    <property type="entry name" value="XPG_N"/>
    <property type="match status" value="1"/>
</dbReference>
<dbReference type="PRINTS" id="PR00853">
    <property type="entry name" value="XPGRADSUPER"/>
</dbReference>
<dbReference type="SMART" id="SM00279">
    <property type="entry name" value="HhH2"/>
    <property type="match status" value="1"/>
</dbReference>
<dbReference type="SMART" id="SM00484">
    <property type="entry name" value="XPGI"/>
    <property type="match status" value="1"/>
</dbReference>
<dbReference type="SMART" id="SM00485">
    <property type="entry name" value="XPGN"/>
    <property type="match status" value="1"/>
</dbReference>
<dbReference type="SUPFAM" id="SSF47807">
    <property type="entry name" value="5' to 3' exonuclease, C-terminal subdomain"/>
    <property type="match status" value="1"/>
</dbReference>
<dbReference type="SUPFAM" id="SSF88723">
    <property type="entry name" value="PIN domain-like"/>
    <property type="match status" value="1"/>
</dbReference>
<dbReference type="PROSITE" id="PS00841">
    <property type="entry name" value="XPG_1"/>
    <property type="match status" value="1"/>
</dbReference>
<name>FEN_METPE</name>
<sequence length="333" mass="36493">MGVALREVLTEYKHPRTWETLAGTAAIDGNNALYQFLSIIRQPDGTPLMNSEGRITSHLSGVFFRTLRFLEKGIRPVYIFDGKPPALKQETIESRREVRREAGVQWEAALARGDQEEAYKQARASSRVTPEIIATSKELLTLMGVPCVQAPSEGEAQAASMAASGAVTYAVSQDYDSLLFGAPLLVRNLTVSSKRRVQGRTIAVQPESIRLDEVLGGLGITREQLIEAGILIGTDFNPGIRGVGPKTALKIVKKDGFADMIAEKLPDFDPSPILQFFRSPPVIANLSLDWQPPDQAGIEDLLCGEYGFATERVRTALQKISGPPGQKTLDRWF</sequence>
<accession>B8GIA0</accession>
<evidence type="ECO:0000250" key="1"/>
<evidence type="ECO:0000255" key="2">
    <source>
        <dbReference type="HAMAP-Rule" id="MF_00614"/>
    </source>
</evidence>
<protein>
    <recommendedName>
        <fullName evidence="2">Flap endonuclease 1</fullName>
        <shortName evidence="2">FEN-1</shortName>
        <ecNumber evidence="2">3.1.-.-</ecNumber>
    </recommendedName>
    <alternativeName>
        <fullName evidence="2">Flap structure-specific endonuclease 1</fullName>
    </alternativeName>
</protein>